<proteinExistence type="evidence at protein level"/>
<organism>
    <name type="scientific">Homo sapiens</name>
    <name type="common">Human</name>
    <dbReference type="NCBI Taxonomy" id="9606"/>
    <lineage>
        <taxon>Eukaryota</taxon>
        <taxon>Metazoa</taxon>
        <taxon>Chordata</taxon>
        <taxon>Craniata</taxon>
        <taxon>Vertebrata</taxon>
        <taxon>Euteleostomi</taxon>
        <taxon>Mammalia</taxon>
        <taxon>Eutheria</taxon>
        <taxon>Euarchontoglires</taxon>
        <taxon>Primates</taxon>
        <taxon>Haplorrhini</taxon>
        <taxon>Catarrhini</taxon>
        <taxon>Hominidae</taxon>
        <taxon>Homo</taxon>
    </lineage>
</organism>
<dbReference type="EMBL" id="U09202">
    <property type="protein sequence ID" value="AAA82155.1"/>
    <property type="status" value="ALT_SEQ"/>
    <property type="molecule type" value="mRNA"/>
</dbReference>
<dbReference type="EMBL" id="U09202">
    <property type="protein sequence ID" value="AAA82154.1"/>
    <property type="status" value="ALT_SEQ"/>
    <property type="molecule type" value="mRNA"/>
</dbReference>
<dbReference type="EMBL" id="D87914">
    <property type="protein sequence ID" value="BAA13497.1"/>
    <property type="molecule type" value="mRNA"/>
</dbReference>
<dbReference type="EMBL" id="D78361">
    <property type="protein sequence ID" value="BAA11373.1"/>
    <property type="molecule type" value="mRNA"/>
</dbReference>
<dbReference type="EMBL" id="D78361">
    <property type="protein sequence ID" value="BAA11374.1"/>
    <property type="status" value="ALT_INIT"/>
    <property type="molecule type" value="mRNA"/>
</dbReference>
<dbReference type="EMBL" id="D89870">
    <property type="protein sequence ID" value="BAA23101.1"/>
    <property type="molecule type" value="Genomic_DNA"/>
</dbReference>
<dbReference type="EMBL" id="AY865622">
    <property type="protein sequence ID" value="AAW56074.1"/>
    <property type="molecule type" value="Genomic_DNA"/>
</dbReference>
<dbReference type="EMBL" id="AC004152">
    <property type="protein sequence ID" value="AAC02802.1"/>
    <property type="molecule type" value="Genomic_DNA"/>
</dbReference>
<dbReference type="EMBL" id="AC004152">
    <property type="protein sequence ID" value="AAC02803.1"/>
    <property type="molecule type" value="Genomic_DNA"/>
</dbReference>
<dbReference type="CCDS" id="CCDS58639.1">
    <molecule id="P54368-1"/>
</dbReference>
<dbReference type="PIR" id="I38591">
    <property type="entry name" value="I38591"/>
</dbReference>
<dbReference type="RefSeq" id="NP_004143.1">
    <molecule id="P54368-1"/>
    <property type="nucleotide sequence ID" value="NM_004152.3"/>
</dbReference>
<dbReference type="PDB" id="4ZGY">
    <property type="method" value="X-ray"/>
    <property type="resolution" value="2.63 A"/>
    <property type="chains" value="B=95-219"/>
</dbReference>
<dbReference type="PDB" id="4ZGZ">
    <property type="method" value="X-ray"/>
    <property type="resolution" value="5.81 A"/>
    <property type="chains" value="B/D=110-228"/>
</dbReference>
<dbReference type="PDB" id="5BWA">
    <property type="method" value="X-ray"/>
    <property type="resolution" value="3.20 A"/>
    <property type="chains" value="B=69-228"/>
</dbReference>
<dbReference type="PDBsum" id="4ZGY"/>
<dbReference type="PDBsum" id="4ZGZ"/>
<dbReference type="PDBsum" id="5BWA"/>
<dbReference type="SMR" id="P54368"/>
<dbReference type="BioGRID" id="111000">
    <property type="interactions" value="37"/>
</dbReference>
<dbReference type="CORUM" id="P54368"/>
<dbReference type="FunCoup" id="P54368">
    <property type="interactions" value="2860"/>
</dbReference>
<dbReference type="IntAct" id="P54368">
    <property type="interactions" value="26"/>
</dbReference>
<dbReference type="MINT" id="P54368"/>
<dbReference type="STRING" id="9606.ENSP00000473381"/>
<dbReference type="ChEMBL" id="CHEMBL4523241"/>
<dbReference type="DrugBank" id="DB00129">
    <property type="generic name" value="Ornithine"/>
</dbReference>
<dbReference type="iPTMnet" id="P54368"/>
<dbReference type="PhosphoSitePlus" id="P54368"/>
<dbReference type="BioMuta" id="OAZ1"/>
<dbReference type="DMDM" id="1709427"/>
<dbReference type="jPOST" id="P54368"/>
<dbReference type="MassIVE" id="P54368"/>
<dbReference type="PaxDb" id="9606-ENSP00000473381"/>
<dbReference type="PeptideAtlas" id="P54368"/>
<dbReference type="ProteomicsDB" id="56685">
    <molecule id="P54368-1"/>
</dbReference>
<dbReference type="Pumba" id="P54368"/>
<dbReference type="Antibodypedia" id="1951">
    <property type="antibodies" value="113 antibodies from 25 providers"/>
</dbReference>
<dbReference type="DNASU" id="4946"/>
<dbReference type="Ensembl" id="ENST00000602676.6">
    <molecule id="P54368-1"/>
    <property type="protein sequence ID" value="ENSP00000473381.1"/>
    <property type="gene ID" value="ENSG00000104904.13"/>
</dbReference>
<dbReference type="GeneID" id="4946"/>
<dbReference type="KEGG" id="hsa:4946"/>
<dbReference type="UCSC" id="uc002lvk.4">
    <molecule id="P54368-1"/>
    <property type="organism name" value="human"/>
</dbReference>
<dbReference type="AGR" id="HGNC:8095"/>
<dbReference type="CTD" id="4946"/>
<dbReference type="DisGeNET" id="4946"/>
<dbReference type="GeneCards" id="OAZ1"/>
<dbReference type="HGNC" id="HGNC:8095">
    <property type="gene designation" value="OAZ1"/>
</dbReference>
<dbReference type="HPA" id="ENSG00000104904">
    <property type="expression patterns" value="Low tissue specificity"/>
</dbReference>
<dbReference type="MIM" id="601579">
    <property type="type" value="gene"/>
</dbReference>
<dbReference type="neXtProt" id="NX_P54368"/>
<dbReference type="OpenTargets" id="ENSG00000104904"/>
<dbReference type="PharmGKB" id="PA31884"/>
<dbReference type="VEuPathDB" id="HostDB:ENSG00000104904"/>
<dbReference type="eggNOG" id="KOG4387">
    <property type="taxonomic scope" value="Eukaryota"/>
</dbReference>
<dbReference type="GeneTree" id="ENSGT00940000159808"/>
<dbReference type="InParanoid" id="P54368"/>
<dbReference type="OMA" id="HVDHVFI"/>
<dbReference type="OrthoDB" id="5959761at2759"/>
<dbReference type="PAN-GO" id="P54368">
    <property type="GO annotations" value="4 GO annotations based on evolutionary models"/>
</dbReference>
<dbReference type="PhylomeDB" id="P54368"/>
<dbReference type="TreeFam" id="TF314741"/>
<dbReference type="PathwayCommons" id="P54368"/>
<dbReference type="Reactome" id="R-HSA-350562">
    <property type="pathway name" value="Regulation of ornithine decarboxylase (ODC)"/>
</dbReference>
<dbReference type="SignaLink" id="P54368"/>
<dbReference type="BioGRID-ORCS" id="4946">
    <property type="hits" value="46 hits in 1155 CRISPR screens"/>
</dbReference>
<dbReference type="ChiTaRS" id="OAZ1">
    <property type="organism name" value="human"/>
</dbReference>
<dbReference type="EvolutionaryTrace" id="P54368"/>
<dbReference type="GeneWiki" id="OAZ1"/>
<dbReference type="GenomeRNAi" id="4946"/>
<dbReference type="Pharos" id="P54368">
    <property type="development level" value="Tbio"/>
</dbReference>
<dbReference type="PRO" id="PR:P54368"/>
<dbReference type="Proteomes" id="UP000005640">
    <property type="component" value="Chromosome 19"/>
</dbReference>
<dbReference type="RNAct" id="P54368">
    <property type="molecule type" value="protein"/>
</dbReference>
<dbReference type="Bgee" id="ENSG00000104904">
    <property type="expression patterns" value="Expressed in pons and 213 other cell types or tissues"/>
</dbReference>
<dbReference type="ExpressionAtlas" id="P54368">
    <property type="expression patterns" value="baseline and differential"/>
</dbReference>
<dbReference type="GO" id="GO:0005737">
    <property type="term" value="C:cytoplasm"/>
    <property type="evidence" value="ECO:0000318"/>
    <property type="project" value="GO_Central"/>
</dbReference>
<dbReference type="GO" id="GO:0005829">
    <property type="term" value="C:cytosol"/>
    <property type="evidence" value="ECO:0000304"/>
    <property type="project" value="Reactome"/>
</dbReference>
<dbReference type="GO" id="GO:0005634">
    <property type="term" value="C:nucleus"/>
    <property type="evidence" value="ECO:0000318"/>
    <property type="project" value="GO_Central"/>
</dbReference>
<dbReference type="GO" id="GO:0008073">
    <property type="term" value="F:ornithine decarboxylase inhibitor activity"/>
    <property type="evidence" value="ECO:0000314"/>
    <property type="project" value="UniProtKB"/>
</dbReference>
<dbReference type="GO" id="GO:1902268">
    <property type="term" value="P:negative regulation of polyamine transmembrane transport"/>
    <property type="evidence" value="ECO:0007669"/>
    <property type="project" value="Ensembl"/>
</dbReference>
<dbReference type="GO" id="GO:0006596">
    <property type="term" value="P:polyamine biosynthetic process"/>
    <property type="evidence" value="ECO:0000304"/>
    <property type="project" value="ProtInc"/>
</dbReference>
<dbReference type="GO" id="GO:0090316">
    <property type="term" value="P:positive regulation of intracellular protein transport"/>
    <property type="evidence" value="ECO:0000250"/>
    <property type="project" value="UniProtKB"/>
</dbReference>
<dbReference type="GO" id="GO:0045732">
    <property type="term" value="P:positive regulation of protein catabolic process"/>
    <property type="evidence" value="ECO:0000314"/>
    <property type="project" value="UniProtKB"/>
</dbReference>
<dbReference type="GO" id="GO:0075523">
    <property type="term" value="P:viral translational frameshifting"/>
    <property type="evidence" value="ECO:0007669"/>
    <property type="project" value="UniProtKB-KW"/>
</dbReference>
<dbReference type="DisProt" id="DP02674"/>
<dbReference type="FunFam" id="3.40.630.60:FF:000001">
    <property type="entry name" value="Ornithine decarboxylase antizyme 1"/>
    <property type="match status" value="1"/>
</dbReference>
<dbReference type="Gene3D" id="3.40.630.60">
    <property type="match status" value="1"/>
</dbReference>
<dbReference type="InterPro" id="IPR016181">
    <property type="entry name" value="Acyl_CoA_acyltransferase"/>
</dbReference>
<dbReference type="InterPro" id="IPR002993">
    <property type="entry name" value="ODC_AZ"/>
</dbReference>
<dbReference type="InterPro" id="IPR038581">
    <property type="entry name" value="ODC_AZ_sf"/>
</dbReference>
<dbReference type="PANTHER" id="PTHR10279">
    <property type="entry name" value="ORNITHINE DECARBOXYLASE ANTIZYME"/>
    <property type="match status" value="1"/>
</dbReference>
<dbReference type="PANTHER" id="PTHR10279:SF8">
    <property type="entry name" value="ORNITHINE DECARBOXYLASE ANTIZYME 1"/>
    <property type="match status" value="1"/>
</dbReference>
<dbReference type="Pfam" id="PF02100">
    <property type="entry name" value="ODC_AZ"/>
    <property type="match status" value="1"/>
</dbReference>
<dbReference type="SUPFAM" id="SSF55729">
    <property type="entry name" value="Acyl-CoA N-acyltransferases (Nat)"/>
    <property type="match status" value="1"/>
</dbReference>
<dbReference type="PROSITE" id="PS01337">
    <property type="entry name" value="ODC_AZ"/>
    <property type="match status" value="1"/>
</dbReference>
<reference key="1">
    <citation type="journal article" date="1994" name="Biochim. Biophys. Acta">
        <title>Molecular cloning and sequencing of a human cDNA encoding ornithine decarboxylase antizyme.</title>
        <authorList>
            <person name="Tewari D.S."/>
            <person name="Qian Y."/>
            <person name="Thornton R.D."/>
            <person name="Pieringer J."/>
            <person name="Taub R."/>
            <person name="Mochan E."/>
            <person name="Tewari M."/>
        </authorList>
    </citation>
    <scope>NUCLEOTIDE SEQUENCE [MRNA]</scope>
    <source>
        <tissue>Fibroblast</tissue>
    </source>
</reference>
<reference key="2">
    <citation type="submission" date="1996-10" db="EMBL/GenBank/DDBJ databases">
        <title>Molecular cloning of human antizyme from brain library.</title>
        <authorList>
            <person name="Hideyama T."/>
            <person name="Nisiyama M."/>
            <person name="Hayashi S."/>
        </authorList>
    </citation>
    <scope>NUCLEOTIDE SEQUENCE [MRNA]</scope>
    <source>
        <tissue>Brain</tissue>
    </source>
</reference>
<reference key="3">
    <citation type="journal article" date="1996" name="Biochem. Mol. Biol. Int.">
        <title>Molecular cloning of human antizyme cDNA.</title>
        <authorList>
            <person name="Yang D."/>
            <person name="Takii T."/>
            <person name="Hayashi H."/>
            <person name="Itoh S."/>
            <person name="Hayashi M."/>
            <person name="Onozaki K."/>
        </authorList>
    </citation>
    <scope>NUCLEOTIDE SEQUENCE [MRNA]</scope>
    <source>
        <tissue>Lymphoma</tissue>
    </source>
</reference>
<reference key="4">
    <citation type="journal article" date="1997" name="Gene">
        <title>Characterization of the human antizyme gene.</title>
        <authorList>
            <person name="Hayashi T."/>
            <person name="Matsufuji S."/>
            <person name="Hayashi S."/>
        </authorList>
    </citation>
    <scope>NUCLEOTIDE SEQUENCE [GENOMIC DNA]</scope>
</reference>
<reference key="5">
    <citation type="submission" date="2004-12" db="EMBL/GenBank/DDBJ databases">
        <authorList>
            <consortium name="NIEHS SNPs program"/>
        </authorList>
    </citation>
    <scope>NUCLEOTIDE SEQUENCE [GENOMIC DNA]</scope>
    <scope>VARIANTS LEU-32; ASP-44; PHE-50; PHE-53 AND VAL-147</scope>
</reference>
<reference key="6">
    <citation type="journal article" date="2004" name="Nature">
        <title>The DNA sequence and biology of human chromosome 19.</title>
        <authorList>
            <person name="Grimwood J."/>
            <person name="Gordon L.A."/>
            <person name="Olsen A.S."/>
            <person name="Terry A."/>
            <person name="Schmutz J."/>
            <person name="Lamerdin J.E."/>
            <person name="Hellsten U."/>
            <person name="Goodstein D."/>
            <person name="Couronne O."/>
            <person name="Tran-Gyamfi M."/>
            <person name="Aerts A."/>
            <person name="Altherr M."/>
            <person name="Ashworth L."/>
            <person name="Bajorek E."/>
            <person name="Black S."/>
            <person name="Branscomb E."/>
            <person name="Caenepeel S."/>
            <person name="Carrano A.V."/>
            <person name="Caoile C."/>
            <person name="Chan Y.M."/>
            <person name="Christensen M."/>
            <person name="Cleland C.A."/>
            <person name="Copeland A."/>
            <person name="Dalin E."/>
            <person name="Dehal P."/>
            <person name="Denys M."/>
            <person name="Detter J.C."/>
            <person name="Escobar J."/>
            <person name="Flowers D."/>
            <person name="Fotopulos D."/>
            <person name="Garcia C."/>
            <person name="Georgescu A.M."/>
            <person name="Glavina T."/>
            <person name="Gomez M."/>
            <person name="Gonzales E."/>
            <person name="Groza M."/>
            <person name="Hammon N."/>
            <person name="Hawkins T."/>
            <person name="Haydu L."/>
            <person name="Ho I."/>
            <person name="Huang W."/>
            <person name="Israni S."/>
            <person name="Jett J."/>
            <person name="Kadner K."/>
            <person name="Kimball H."/>
            <person name="Kobayashi A."/>
            <person name="Larionov V."/>
            <person name="Leem S.-H."/>
            <person name="Lopez F."/>
            <person name="Lou Y."/>
            <person name="Lowry S."/>
            <person name="Malfatti S."/>
            <person name="Martinez D."/>
            <person name="McCready P.M."/>
            <person name="Medina C."/>
            <person name="Morgan J."/>
            <person name="Nelson K."/>
            <person name="Nolan M."/>
            <person name="Ovcharenko I."/>
            <person name="Pitluck S."/>
            <person name="Pollard M."/>
            <person name="Popkie A.P."/>
            <person name="Predki P."/>
            <person name="Quan G."/>
            <person name="Ramirez L."/>
            <person name="Rash S."/>
            <person name="Retterer J."/>
            <person name="Rodriguez A."/>
            <person name="Rogers S."/>
            <person name="Salamov A."/>
            <person name="Salazar A."/>
            <person name="She X."/>
            <person name="Smith D."/>
            <person name="Slezak T."/>
            <person name="Solovyev V."/>
            <person name="Thayer N."/>
            <person name="Tice H."/>
            <person name="Tsai M."/>
            <person name="Ustaszewska A."/>
            <person name="Vo N."/>
            <person name="Wagner M."/>
            <person name="Wheeler J."/>
            <person name="Wu K."/>
            <person name="Xie G."/>
            <person name="Yang J."/>
            <person name="Dubchak I."/>
            <person name="Furey T.S."/>
            <person name="DeJong P."/>
            <person name="Dickson M."/>
            <person name="Gordon D."/>
            <person name="Eichler E.E."/>
            <person name="Pennacchio L.A."/>
            <person name="Richardson P."/>
            <person name="Stubbs L."/>
            <person name="Rokhsar D.S."/>
            <person name="Myers R.M."/>
            <person name="Rubin E.M."/>
            <person name="Lucas S.M."/>
        </authorList>
    </citation>
    <scope>NUCLEOTIDE SEQUENCE [LARGE SCALE GENOMIC DNA]</scope>
</reference>
<reference key="7">
    <citation type="journal article" date="2002" name="BMC Cell Biol.">
        <title>A novel link between the proteasome pathway and the signal transduction pathway of the bone morphogenetic proteins (BMPs).</title>
        <authorList>
            <person name="Lin Y."/>
            <person name="Martin J."/>
            <person name="Gruendler C."/>
            <person name="Farley J."/>
            <person name="Meng X."/>
            <person name="Li B.-Y."/>
            <person name="Lechleider R."/>
            <person name="Huff C."/>
            <person name="Kim R.H."/>
            <person name="Grasser W.A."/>
            <person name="Paralkar V."/>
            <person name="Wang T."/>
        </authorList>
    </citation>
    <scope>IDENTIFICATION IN A COMPLEX WITH PSMB4 AND SMAD1</scope>
    <scope>FUNCTION</scope>
</reference>
<reference key="8">
    <citation type="journal article" date="2008" name="Biochem. J.">
        <title>Human ornithine decarboxylase paralogue (ODCp) is an antizyme inhibitor but not an arginine decarboxylase.</title>
        <authorList>
            <person name="Kanerva K."/>
            <person name="Makitie L.T."/>
            <person name="Pelander A."/>
            <person name="Heiskala M."/>
            <person name="Andersson L.C."/>
        </authorList>
    </citation>
    <scope>FUNCTION</scope>
    <scope>INTERACTION WITH AZIN2</scope>
</reference>
<reference key="9">
    <citation type="journal article" date="2019" name="Am. J. Pathol.">
        <title>Astroprincin (FAM171A1, C10orf38): A Regulator of Human Cell Shape and Invasive Growth.</title>
        <authorList>
            <person name="Rasila T."/>
            <person name="Saavalainen O."/>
            <person name="Attalla H."/>
            <person name="Lankila P."/>
            <person name="Haglund C."/>
            <person name="Hoelttae E."/>
            <person name="Andersson L.C."/>
        </authorList>
    </citation>
    <scope>INTERACTION WITH FAM171A1</scope>
</reference>
<reference key="10">
    <citation type="journal article" date="2015" name="Proc. Natl. Acad. Sci. U.S.A.">
        <title>Structural basis of antizyme-mediated regulation of polyamine homeostasis.</title>
        <authorList>
            <person name="Wu H.Y."/>
            <person name="Chen S.F."/>
            <person name="Hsieh J.Y."/>
            <person name="Chou F."/>
            <person name="Wang Y.H."/>
            <person name="Lin W.T."/>
            <person name="Lee P.Y."/>
            <person name="Yu Y.J."/>
            <person name="Lin L.Y."/>
            <person name="Lin T.S."/>
            <person name="Lin C.L."/>
            <person name="Liu G.Y."/>
            <person name="Tzeng S.R."/>
            <person name="Hung H.C."/>
            <person name="Chan N.L."/>
        </authorList>
    </citation>
    <scope>X-RAY CRYSTALLOGRAPHY (2.63 ANGSTROMS) OF 95-219 IN COMPLEXES WITH ODC1 AND AZIN1</scope>
</reference>
<reference key="11">
    <citation type="journal article" date="2015" name="Sci. Rep.">
        <title>Structural basis of ornithine decarboxylase inactivation and accelerated degradation by polyamine sensor antizyme1.</title>
        <authorList>
            <person name="Wu D."/>
            <person name="Kaan H.Y."/>
            <person name="Zheng X."/>
            <person name="Tang X."/>
            <person name="He Y."/>
            <person name="Vanessa Tan Q."/>
            <person name="Zhang N."/>
            <person name="Song H."/>
        </authorList>
    </citation>
    <scope>X-RAY CRYSTALLOGRAPHY (3.20 ANGSTROMS) OF 69-228 IN COMPLEX WITH ODC1</scope>
</reference>
<keyword id="KW-0002">3D-structure</keyword>
<keyword id="KW-0620">Polyamine biosynthesis</keyword>
<keyword id="KW-1267">Proteomics identification</keyword>
<keyword id="KW-1185">Reference proteome</keyword>
<keyword id="KW-0688">Ribosomal frameshifting</keyword>
<keyword id="KW-0813">Transport</keyword>
<comment type="function">
    <text evidence="3 4 5 6">Ornithine decarboxylase (ODC) antizyme protein that negatively regulates ODC activity and intracellular polyamine biosynthesis and uptake in response to increased intracellular polyamine levels. Binds to ODC monomers, inhibiting the assembly of the functional ODC homodimer, and targets the monomers for ubiquitin-independent proteolytic destruction by the 26S proteasome (PubMed:17900240, PubMed:26305948, PubMed:26443277). Triggers ODC degradation by inducing the exposure of a cryptic proteasome-interacting surface of ODC (PubMed:26305948). Stabilizes AZIN2 by interfering with its ubiquitination (PubMed:17900240). Also inhibits cellular uptake of polyamines by inactivating the polyamine uptake transporter. SMAD1/OAZ1/PSMB4 complex mediates the degradation of the CREBBP/EP300 repressor SNIP1. Involved in the translocation of AZIN2 from ER-Golgi intermediate compartment (ERGIC) to the cytosol (PubMed:12097147).</text>
</comment>
<comment type="subunit">
    <text evidence="3 4 5 6 7">Interacts with ODC1 and thereby sterically blocks ODC homodimerization (PubMed:26305948, PubMed:26443277). Forms a ternary complex with PSMB4 and OAZ1 before PSMB4 is incorporated into the 20S proteasome (PubMed:12097147). Interacts with AZIN2; this interaction disrupts the interaction between the antizyme and ODC1 (PubMed:17900240). Interacts with FAM171A1 (PubMed:30312582).</text>
</comment>
<comment type="interaction">
    <interactant intactId="EBI-948441">
        <id>P54368</id>
    </interactant>
    <interactant intactId="EBI-6623016">
        <id>P30556</id>
        <label>AGTR1</label>
    </interactant>
    <organismsDiffer>false</organismsDiffer>
    <experiments>2</experiments>
</comment>
<comment type="alternative products">
    <event type="ribosomal frameshifting"/>
    <isoform>
        <id>P54368-1</id>
        <name>1</name>
        <sequence type="displayed"/>
    </isoform>
    <text evidence="1">A ribosomal frameshift occurs between the codons for Ser-68 and Asp-69. An autoregulatory mechanism enables modulation of frameshifting according to the cellular concentration of polyamines.</text>
</comment>
<comment type="induction">
    <text evidence="1">Induced by a ribosomal frameshifting mechanism in response to increased levels of intracellular polyamines.</text>
</comment>
<comment type="similarity">
    <text evidence="9">Belongs to the ODC antizyme family.</text>
</comment>
<comment type="sequence caution" evidence="9">
    <conflict type="erroneous initiation">
        <sequence resource="EMBL-CDS" id="BAA11374"/>
    </conflict>
</comment>
<feature type="chain" id="PRO_0000220849" description="Ornithine decarboxylase antizyme 1">
    <location>
        <begin position="1"/>
        <end position="228"/>
    </location>
</feature>
<feature type="region of interest" description="Disordered" evidence="2">
    <location>
        <begin position="17"/>
        <end position="55"/>
    </location>
</feature>
<feature type="compositionally biased region" description="Low complexity" evidence="2">
    <location>
        <begin position="36"/>
        <end position="55"/>
    </location>
</feature>
<feature type="sequence variant" id="VAR_022215" description="In dbSNP:rs4667." evidence="8">
    <original>R</original>
    <variation>L</variation>
    <location>
        <position position="32"/>
    </location>
</feature>
<feature type="sequence variant" id="VAR_022216" description="In dbSNP:rs28359762." evidence="8">
    <original>G</original>
    <variation>D</variation>
    <location>
        <position position="44"/>
    </location>
</feature>
<feature type="sequence variant" id="VAR_022217" description="In dbSNP:rs28384673." evidence="8">
    <original>S</original>
    <variation>F</variation>
    <location>
        <position position="50"/>
    </location>
</feature>
<feature type="sequence variant" id="VAR_022218" description="In dbSNP:rs2230749." evidence="8">
    <original>S</original>
    <variation>F</variation>
    <location>
        <position position="53"/>
    </location>
</feature>
<feature type="sequence variant" id="VAR_022219" description="In dbSNP:rs28384677." evidence="8">
    <original>A</original>
    <variation>V</variation>
    <location>
        <position position="147"/>
    </location>
</feature>
<feature type="sequence conflict" description="In Ref. 2; BAA13497." evidence="9" ref="2">
    <original>D</original>
    <variation>C</variation>
    <location>
        <position position="69"/>
    </location>
</feature>
<feature type="strand" evidence="10">
    <location>
        <begin position="96"/>
        <end position="100"/>
    </location>
</feature>
<feature type="strand" evidence="10">
    <location>
        <begin position="102"/>
        <end position="109"/>
    </location>
</feature>
<feature type="strand" evidence="10">
    <location>
        <begin position="111"/>
        <end position="120"/>
    </location>
</feature>
<feature type="strand" evidence="10">
    <location>
        <begin position="128"/>
        <end position="135"/>
    </location>
</feature>
<feature type="strand" evidence="10">
    <location>
        <begin position="138"/>
        <end position="142"/>
    </location>
</feature>
<feature type="strand" evidence="11">
    <location>
        <begin position="145"/>
        <end position="147"/>
    </location>
</feature>
<feature type="helix" evidence="10">
    <location>
        <begin position="152"/>
        <end position="165"/>
    </location>
</feature>
<feature type="strand" evidence="10">
    <location>
        <begin position="170"/>
        <end position="179"/>
    </location>
</feature>
<feature type="helix" evidence="10">
    <location>
        <begin position="183"/>
        <end position="193"/>
    </location>
</feature>
<feature type="strand" evidence="11">
    <location>
        <begin position="195"/>
        <end position="197"/>
    </location>
</feature>
<feature type="strand" evidence="10">
    <location>
        <begin position="211"/>
        <end position="217"/>
    </location>
</feature>
<accession>P54368</accession>
<accession>O43382</accession>
<accession>Q14989</accession>
<accession>Q92595</accession>
<accession>Q9UPL9</accession>
<sequence>MVKSSLQRILNSHCFAREKEGDKPSATIHASRTMPLLSLHSRGGSSSESSRVSLHCCSNPGPGPRWCSDAPHPPLKIPGGRGNSQRDHNLSANLFYSDDRLNVTEELTSNDKTRILNVQSRLTDAKRINWRTVLSGGSLYIEIPGGALPEGSKDSFAVLLEFAEEQLRADHVFICFHKNREDRAALLRTFSFLGFEIVRPGHPLVPKRPDACFMAYTFERESSGEEEE</sequence>
<name>OAZ1_HUMAN</name>
<gene>
    <name type="primary">OAZ1</name>
    <name type="synonym">OAZ</name>
</gene>
<protein>
    <recommendedName>
        <fullName>Ornithine decarboxylase antizyme 1</fullName>
        <shortName>AZ1</shortName>
        <shortName>ODC-Az</shortName>
    </recommendedName>
</protein>
<evidence type="ECO:0000250" key="1">
    <source>
        <dbReference type="UniProtKB" id="P54370"/>
    </source>
</evidence>
<evidence type="ECO:0000256" key="2">
    <source>
        <dbReference type="SAM" id="MobiDB-lite"/>
    </source>
</evidence>
<evidence type="ECO:0000269" key="3">
    <source>
    </source>
</evidence>
<evidence type="ECO:0000269" key="4">
    <source>
    </source>
</evidence>
<evidence type="ECO:0000269" key="5">
    <source>
    </source>
</evidence>
<evidence type="ECO:0000269" key="6">
    <source>
    </source>
</evidence>
<evidence type="ECO:0000269" key="7">
    <source>
    </source>
</evidence>
<evidence type="ECO:0000269" key="8">
    <source ref="5"/>
</evidence>
<evidence type="ECO:0000305" key="9"/>
<evidence type="ECO:0007829" key="10">
    <source>
        <dbReference type="PDB" id="4ZGY"/>
    </source>
</evidence>
<evidence type="ECO:0007829" key="11">
    <source>
        <dbReference type="PDB" id="5BWA"/>
    </source>
</evidence>